<name>AROC_BORPA</name>
<keyword id="KW-0028">Amino-acid biosynthesis</keyword>
<keyword id="KW-0057">Aromatic amino acid biosynthesis</keyword>
<keyword id="KW-0274">FAD</keyword>
<keyword id="KW-0285">Flavoprotein</keyword>
<keyword id="KW-0288">FMN</keyword>
<keyword id="KW-0456">Lyase</keyword>
<keyword id="KW-0521">NADP</keyword>
<proteinExistence type="inferred from homology"/>
<sequence>MSGNTLGTLFCVTNFGESHGPAIGCVVDGCPPGLPLEAADIQAELDRRRPGTSRHVTQRQEADQVEILSGVYEGVTTGTPIGLLIRNTDARSKDYSNIADTFRPGHADFAYWRKYGVRDPRGGGRSSARLTAPTVAAGAIAKKWLAGQFGVRVRGYMSQLGPIAIPFSSWDDVPGNAFYAPNAAVVPELEAYMDQLRRDGDSVGARIEVVAEGLPAGWGEPIYDRLDADIAHAMMGLNAVKGVSLGAGFESIAQRGSEHGGEITPEGFASNHAGGVLGGISTGQPITVSLAIKPTSSIRVERRSVNRAGEPVMVQTLGRHDPCVGIRATPIAEALLALVLIDHALRQRAQCGG</sequence>
<organism>
    <name type="scientific">Bordetella parapertussis (strain 12822 / ATCC BAA-587 / NCTC 13253)</name>
    <dbReference type="NCBI Taxonomy" id="257311"/>
    <lineage>
        <taxon>Bacteria</taxon>
        <taxon>Pseudomonadati</taxon>
        <taxon>Pseudomonadota</taxon>
        <taxon>Betaproteobacteria</taxon>
        <taxon>Burkholderiales</taxon>
        <taxon>Alcaligenaceae</taxon>
        <taxon>Bordetella</taxon>
    </lineage>
</organism>
<protein>
    <recommendedName>
        <fullName evidence="1">Chorismate synthase</fullName>
        <shortName evidence="1">CS</shortName>
        <ecNumber evidence="1">4.2.3.5</ecNumber>
    </recommendedName>
    <alternativeName>
        <fullName evidence="1">5-enolpyruvylshikimate-3-phosphate phospholyase</fullName>
    </alternativeName>
</protein>
<accession>Q7W950</accession>
<dbReference type="EC" id="4.2.3.5" evidence="1"/>
<dbReference type="EMBL" id="BX640428">
    <property type="protein sequence ID" value="CAE37223.1"/>
    <property type="molecule type" value="Genomic_DNA"/>
</dbReference>
<dbReference type="RefSeq" id="WP_010928280.1">
    <property type="nucleotide sequence ID" value="NC_002928.3"/>
</dbReference>
<dbReference type="SMR" id="Q7W950"/>
<dbReference type="GeneID" id="93203694"/>
<dbReference type="KEGG" id="bpa:BPP1923"/>
<dbReference type="HOGENOM" id="CLU_034547_0_2_4"/>
<dbReference type="UniPathway" id="UPA00053">
    <property type="reaction ID" value="UER00090"/>
</dbReference>
<dbReference type="Proteomes" id="UP000001421">
    <property type="component" value="Chromosome"/>
</dbReference>
<dbReference type="GO" id="GO:0005829">
    <property type="term" value="C:cytosol"/>
    <property type="evidence" value="ECO:0007669"/>
    <property type="project" value="TreeGrafter"/>
</dbReference>
<dbReference type="GO" id="GO:0004107">
    <property type="term" value="F:chorismate synthase activity"/>
    <property type="evidence" value="ECO:0007669"/>
    <property type="project" value="UniProtKB-UniRule"/>
</dbReference>
<dbReference type="GO" id="GO:0010181">
    <property type="term" value="F:FMN binding"/>
    <property type="evidence" value="ECO:0007669"/>
    <property type="project" value="TreeGrafter"/>
</dbReference>
<dbReference type="GO" id="GO:0008652">
    <property type="term" value="P:amino acid biosynthetic process"/>
    <property type="evidence" value="ECO:0007669"/>
    <property type="project" value="UniProtKB-KW"/>
</dbReference>
<dbReference type="GO" id="GO:0009073">
    <property type="term" value="P:aromatic amino acid family biosynthetic process"/>
    <property type="evidence" value="ECO:0007669"/>
    <property type="project" value="UniProtKB-KW"/>
</dbReference>
<dbReference type="GO" id="GO:0009423">
    <property type="term" value="P:chorismate biosynthetic process"/>
    <property type="evidence" value="ECO:0007669"/>
    <property type="project" value="UniProtKB-UniRule"/>
</dbReference>
<dbReference type="CDD" id="cd07304">
    <property type="entry name" value="Chorismate_synthase"/>
    <property type="match status" value="1"/>
</dbReference>
<dbReference type="FunFam" id="3.60.150.10:FF:000001">
    <property type="entry name" value="Chorismate synthase"/>
    <property type="match status" value="1"/>
</dbReference>
<dbReference type="Gene3D" id="3.60.150.10">
    <property type="entry name" value="Chorismate synthase AroC"/>
    <property type="match status" value="1"/>
</dbReference>
<dbReference type="HAMAP" id="MF_00300">
    <property type="entry name" value="Chorismate_synth"/>
    <property type="match status" value="1"/>
</dbReference>
<dbReference type="InterPro" id="IPR000453">
    <property type="entry name" value="Chorismate_synth"/>
</dbReference>
<dbReference type="InterPro" id="IPR035904">
    <property type="entry name" value="Chorismate_synth_AroC_sf"/>
</dbReference>
<dbReference type="InterPro" id="IPR020541">
    <property type="entry name" value="Chorismate_synthase_CS"/>
</dbReference>
<dbReference type="NCBIfam" id="TIGR00033">
    <property type="entry name" value="aroC"/>
    <property type="match status" value="1"/>
</dbReference>
<dbReference type="NCBIfam" id="NF003793">
    <property type="entry name" value="PRK05382.1"/>
    <property type="match status" value="1"/>
</dbReference>
<dbReference type="PANTHER" id="PTHR21085">
    <property type="entry name" value="CHORISMATE SYNTHASE"/>
    <property type="match status" value="1"/>
</dbReference>
<dbReference type="PANTHER" id="PTHR21085:SF0">
    <property type="entry name" value="CHORISMATE SYNTHASE"/>
    <property type="match status" value="1"/>
</dbReference>
<dbReference type="Pfam" id="PF01264">
    <property type="entry name" value="Chorismate_synt"/>
    <property type="match status" value="1"/>
</dbReference>
<dbReference type="PIRSF" id="PIRSF001456">
    <property type="entry name" value="Chorismate_synth"/>
    <property type="match status" value="1"/>
</dbReference>
<dbReference type="SUPFAM" id="SSF103263">
    <property type="entry name" value="Chorismate synthase, AroC"/>
    <property type="match status" value="1"/>
</dbReference>
<dbReference type="PROSITE" id="PS00787">
    <property type="entry name" value="CHORISMATE_SYNTHASE_1"/>
    <property type="match status" value="1"/>
</dbReference>
<dbReference type="PROSITE" id="PS00788">
    <property type="entry name" value="CHORISMATE_SYNTHASE_2"/>
    <property type="match status" value="1"/>
</dbReference>
<dbReference type="PROSITE" id="PS00789">
    <property type="entry name" value="CHORISMATE_SYNTHASE_3"/>
    <property type="match status" value="1"/>
</dbReference>
<reference key="1">
    <citation type="journal article" date="2003" name="Nat. Genet.">
        <title>Comparative analysis of the genome sequences of Bordetella pertussis, Bordetella parapertussis and Bordetella bronchiseptica.</title>
        <authorList>
            <person name="Parkhill J."/>
            <person name="Sebaihia M."/>
            <person name="Preston A."/>
            <person name="Murphy L.D."/>
            <person name="Thomson N.R."/>
            <person name="Harris D.E."/>
            <person name="Holden M.T.G."/>
            <person name="Churcher C.M."/>
            <person name="Bentley S.D."/>
            <person name="Mungall K.L."/>
            <person name="Cerdeno-Tarraga A.-M."/>
            <person name="Temple L."/>
            <person name="James K.D."/>
            <person name="Harris B."/>
            <person name="Quail M.A."/>
            <person name="Achtman M."/>
            <person name="Atkin R."/>
            <person name="Baker S."/>
            <person name="Basham D."/>
            <person name="Bason N."/>
            <person name="Cherevach I."/>
            <person name="Chillingworth T."/>
            <person name="Collins M."/>
            <person name="Cronin A."/>
            <person name="Davis P."/>
            <person name="Doggett J."/>
            <person name="Feltwell T."/>
            <person name="Goble A."/>
            <person name="Hamlin N."/>
            <person name="Hauser H."/>
            <person name="Holroyd S."/>
            <person name="Jagels K."/>
            <person name="Leather S."/>
            <person name="Moule S."/>
            <person name="Norberczak H."/>
            <person name="O'Neil S."/>
            <person name="Ormond D."/>
            <person name="Price C."/>
            <person name="Rabbinowitsch E."/>
            <person name="Rutter S."/>
            <person name="Sanders M."/>
            <person name="Saunders D."/>
            <person name="Seeger K."/>
            <person name="Sharp S."/>
            <person name="Simmonds M."/>
            <person name="Skelton J."/>
            <person name="Squares R."/>
            <person name="Squares S."/>
            <person name="Stevens K."/>
            <person name="Unwin L."/>
            <person name="Whitehead S."/>
            <person name="Barrell B.G."/>
            <person name="Maskell D.J."/>
        </authorList>
    </citation>
    <scope>NUCLEOTIDE SEQUENCE [LARGE SCALE GENOMIC DNA]</scope>
    <source>
        <strain>12822 / ATCC BAA-587 / NCTC 13253</strain>
    </source>
</reference>
<gene>
    <name evidence="1" type="primary">aroC</name>
    <name type="ordered locus">BPP1923</name>
</gene>
<comment type="function">
    <text evidence="1">Catalyzes the anti-1,4-elimination of the C-3 phosphate and the C-6 proR hydrogen from 5-enolpyruvylshikimate-3-phosphate (EPSP) to yield chorismate, which is the branch point compound that serves as the starting substrate for the three terminal pathways of aromatic amino acid biosynthesis. This reaction introduces a second double bond into the aromatic ring system.</text>
</comment>
<comment type="catalytic activity">
    <reaction evidence="1">
        <text>5-O-(1-carboxyvinyl)-3-phosphoshikimate = chorismate + phosphate</text>
        <dbReference type="Rhea" id="RHEA:21020"/>
        <dbReference type="ChEBI" id="CHEBI:29748"/>
        <dbReference type="ChEBI" id="CHEBI:43474"/>
        <dbReference type="ChEBI" id="CHEBI:57701"/>
        <dbReference type="EC" id="4.2.3.5"/>
    </reaction>
</comment>
<comment type="cofactor">
    <cofactor evidence="1">
        <name>FMNH2</name>
        <dbReference type="ChEBI" id="CHEBI:57618"/>
    </cofactor>
    <text evidence="1">Reduced FMN (FMNH(2)).</text>
</comment>
<comment type="pathway">
    <text evidence="1">Metabolic intermediate biosynthesis; chorismate biosynthesis; chorismate from D-erythrose 4-phosphate and phosphoenolpyruvate: step 7/7.</text>
</comment>
<comment type="subunit">
    <text evidence="1">Homotetramer.</text>
</comment>
<comment type="similarity">
    <text evidence="1">Belongs to the chorismate synthase family.</text>
</comment>
<evidence type="ECO:0000255" key="1">
    <source>
        <dbReference type="HAMAP-Rule" id="MF_00300"/>
    </source>
</evidence>
<feature type="chain" id="PRO_0000140558" description="Chorismate synthase">
    <location>
        <begin position="1"/>
        <end position="353"/>
    </location>
</feature>
<feature type="binding site" evidence="1">
    <location>
        <position position="48"/>
    </location>
    <ligand>
        <name>NADP(+)</name>
        <dbReference type="ChEBI" id="CHEBI:58349"/>
    </ligand>
</feature>
<feature type="binding site" evidence="1">
    <location>
        <position position="54"/>
    </location>
    <ligand>
        <name>NADP(+)</name>
        <dbReference type="ChEBI" id="CHEBI:58349"/>
    </ligand>
</feature>
<feature type="binding site" evidence="1">
    <location>
        <begin position="125"/>
        <end position="127"/>
    </location>
    <ligand>
        <name>FMN</name>
        <dbReference type="ChEBI" id="CHEBI:58210"/>
    </ligand>
</feature>
<feature type="binding site" evidence="1">
    <location>
        <begin position="238"/>
        <end position="239"/>
    </location>
    <ligand>
        <name>FMN</name>
        <dbReference type="ChEBI" id="CHEBI:58210"/>
    </ligand>
</feature>
<feature type="binding site" evidence="1">
    <location>
        <position position="278"/>
    </location>
    <ligand>
        <name>FMN</name>
        <dbReference type="ChEBI" id="CHEBI:58210"/>
    </ligand>
</feature>
<feature type="binding site" evidence="1">
    <location>
        <begin position="293"/>
        <end position="297"/>
    </location>
    <ligand>
        <name>FMN</name>
        <dbReference type="ChEBI" id="CHEBI:58210"/>
    </ligand>
</feature>
<feature type="binding site" evidence="1">
    <location>
        <position position="319"/>
    </location>
    <ligand>
        <name>FMN</name>
        <dbReference type="ChEBI" id="CHEBI:58210"/>
    </ligand>
</feature>